<accession>B0Z539</accession>
<proteinExistence type="inferred from homology"/>
<sequence>MKTLYSLRRFYPVETLFNGTLALAGRDQETTGFAWWAGNARLINLSGKLLGAHVAHAGLIVFWAGAMNLFEVAHFVPEKPMYEQGLILLPHLATLGWGVGPGGEVIDTFPYFVSGVLHLISSAVLGFGGIYHALLGPETLEESFPFFGYVWKDRNKMTTILGIHLILLGLGAFLLVFKALYFGGVYDTWAPGGGDVRKITNLTLSPSILFGYLLKSPFGGEGWIVSVDDLEDIIGGHVWLGSICILGGIWHILTKPFAWARRALVWSGEAYLSYSLAALSVFGFIACCFVWFNNTAYPSEFYGPTGPEASQAQAFTFLVRDQRLGANVGSAQGPTGLGKYLMRSPTGEVIFGGETMRFWDLRAPWLEPLRGPNGLDLSRLKKDIQPWQERRSAEYMTHAPLGSLNSVGGVATEINAVNYVSPRSWLATSHFVLGFFLFVGHLWHAGRARAAAAGFEKGIDRDFEPALSMTPLN</sequence>
<keyword id="KW-0007">Acetylation</keyword>
<keyword id="KW-0148">Chlorophyll</keyword>
<keyword id="KW-0150">Chloroplast</keyword>
<keyword id="KW-0157">Chromophore</keyword>
<keyword id="KW-0464">Manganese</keyword>
<keyword id="KW-0472">Membrane</keyword>
<keyword id="KW-0479">Metal-binding</keyword>
<keyword id="KW-0597">Phosphoprotein</keyword>
<keyword id="KW-0602">Photosynthesis</keyword>
<keyword id="KW-0604">Photosystem II</keyword>
<keyword id="KW-0934">Plastid</keyword>
<keyword id="KW-0793">Thylakoid</keyword>
<keyword id="KW-0812">Transmembrane</keyword>
<keyword id="KW-1133">Transmembrane helix</keyword>
<dbReference type="EMBL" id="EU262890">
    <property type="protein sequence ID" value="ABX10032.1"/>
    <property type="molecule type" value="Genomic_DNA"/>
</dbReference>
<dbReference type="RefSeq" id="YP_001687278.1">
    <property type="nucleotide sequence ID" value="NC_010360.2"/>
</dbReference>
<dbReference type="SMR" id="B0Z539"/>
<dbReference type="GeneID" id="5955357"/>
<dbReference type="GO" id="GO:0009535">
    <property type="term" value="C:chloroplast thylakoid membrane"/>
    <property type="evidence" value="ECO:0007669"/>
    <property type="project" value="UniProtKB-SubCell"/>
</dbReference>
<dbReference type="GO" id="GO:0009523">
    <property type="term" value="C:photosystem II"/>
    <property type="evidence" value="ECO:0007669"/>
    <property type="project" value="UniProtKB-KW"/>
</dbReference>
<dbReference type="GO" id="GO:0016168">
    <property type="term" value="F:chlorophyll binding"/>
    <property type="evidence" value="ECO:0007669"/>
    <property type="project" value="UniProtKB-UniRule"/>
</dbReference>
<dbReference type="GO" id="GO:0045156">
    <property type="term" value="F:electron transporter, transferring electrons within the cyclic electron transport pathway of photosynthesis activity"/>
    <property type="evidence" value="ECO:0007669"/>
    <property type="project" value="InterPro"/>
</dbReference>
<dbReference type="GO" id="GO:0046872">
    <property type="term" value="F:metal ion binding"/>
    <property type="evidence" value="ECO:0007669"/>
    <property type="project" value="UniProtKB-KW"/>
</dbReference>
<dbReference type="GO" id="GO:0009772">
    <property type="term" value="P:photosynthetic electron transport in photosystem II"/>
    <property type="evidence" value="ECO:0007669"/>
    <property type="project" value="InterPro"/>
</dbReference>
<dbReference type="FunFam" id="1.10.10.670:FF:000001">
    <property type="entry name" value="Photosystem II CP43 reaction center protein"/>
    <property type="match status" value="1"/>
</dbReference>
<dbReference type="Gene3D" id="1.10.10.670">
    <property type="entry name" value="photosystem ii from thermosynechococcus elongatus"/>
    <property type="match status" value="1"/>
</dbReference>
<dbReference type="HAMAP" id="MF_01496">
    <property type="entry name" value="PSII_PsbC_CP43"/>
    <property type="match status" value="1"/>
</dbReference>
<dbReference type="InterPro" id="IPR000932">
    <property type="entry name" value="PS_antenna-like"/>
</dbReference>
<dbReference type="InterPro" id="IPR036001">
    <property type="entry name" value="PS_II_antenna-like_sf"/>
</dbReference>
<dbReference type="InterPro" id="IPR005869">
    <property type="entry name" value="PSII_PsbC"/>
</dbReference>
<dbReference type="InterPro" id="IPR044900">
    <property type="entry name" value="PSII_PsbC_sf"/>
</dbReference>
<dbReference type="NCBIfam" id="TIGR01153">
    <property type="entry name" value="psbC"/>
    <property type="match status" value="1"/>
</dbReference>
<dbReference type="Pfam" id="PF00421">
    <property type="entry name" value="PSII"/>
    <property type="match status" value="1"/>
</dbReference>
<dbReference type="SUPFAM" id="SSF161077">
    <property type="entry name" value="Photosystem II antenna protein-like"/>
    <property type="match status" value="1"/>
</dbReference>
<evidence type="ECO:0000255" key="1">
    <source>
        <dbReference type="HAMAP-Rule" id="MF_01496"/>
    </source>
</evidence>
<protein>
    <recommendedName>
        <fullName evidence="1">Photosystem II CP43 reaction center protein</fullName>
    </recommendedName>
    <alternativeName>
        <fullName evidence="1">PSII 43 kDa protein</fullName>
    </alternativeName>
    <alternativeName>
        <fullName evidence="1">Protein CP-43</fullName>
    </alternativeName>
</protein>
<name>PSBC_OENGL</name>
<organism>
    <name type="scientific">Oenothera glazioviana</name>
    <name type="common">Large-flowered evening primrose</name>
    <name type="synonym">Oenothera erythrosepala</name>
    <dbReference type="NCBI Taxonomy" id="482428"/>
    <lineage>
        <taxon>Eukaryota</taxon>
        <taxon>Viridiplantae</taxon>
        <taxon>Streptophyta</taxon>
        <taxon>Embryophyta</taxon>
        <taxon>Tracheophyta</taxon>
        <taxon>Spermatophyta</taxon>
        <taxon>Magnoliopsida</taxon>
        <taxon>eudicotyledons</taxon>
        <taxon>Gunneridae</taxon>
        <taxon>Pentapetalae</taxon>
        <taxon>rosids</taxon>
        <taxon>malvids</taxon>
        <taxon>Myrtales</taxon>
        <taxon>Onagraceae</taxon>
        <taxon>Onagroideae</taxon>
        <taxon>Onagreae</taxon>
        <taxon>Oenothera</taxon>
    </lineage>
</organism>
<geneLocation type="chloroplast"/>
<comment type="function">
    <text evidence="1">One of the components of the core complex of photosystem II (PSII). It binds chlorophyll and helps catalyze the primary light-induced photochemical processes of PSII. PSII is a light-driven water:plastoquinone oxidoreductase, using light energy to abstract electrons from H(2)O, generating O(2) and a proton gradient subsequently used for ATP formation.</text>
</comment>
<comment type="cofactor">
    <text evidence="1">Binds multiple chlorophylls and provides some of the ligands for the Ca-4Mn-5O cluster of the oxygen-evolving complex. It may also provide a ligand for a Cl- that is required for oxygen evolution. PSII binds additional chlorophylls, carotenoids and specific lipids.</text>
</comment>
<comment type="subunit">
    <text evidence="1">PSII is composed of 1 copy each of membrane proteins PsbA, PsbB, PsbC, PsbD, PsbE, PsbF, PsbH, PsbI, PsbJ, PsbK, PsbL, PsbM, PsbT, PsbX, PsbY, PsbZ, Psb30/Ycf12, at least 3 peripheral proteins of the oxygen-evolving complex and a large number of cofactors. It forms dimeric complexes.</text>
</comment>
<comment type="subcellular location">
    <subcellularLocation>
        <location evidence="1">Plastid</location>
        <location evidence="1">Chloroplast thylakoid membrane</location>
        <topology evidence="1">Multi-pass membrane protein</topology>
    </subcellularLocation>
</comment>
<comment type="similarity">
    <text evidence="1">Belongs to the PsbB/PsbC family. PsbC subfamily.</text>
</comment>
<reference key="1">
    <citation type="journal article" date="2008" name="Nucleic Acids Res.">
        <title>The complete nucleotide sequences of the five genetically distinct plastid genomes of Oenothera, subsection Oenothera: I. Sequence evaluation and plastome evolution.</title>
        <authorList>
            <person name="Greiner S."/>
            <person name="Wang X."/>
            <person name="Rauwolf U."/>
            <person name="Silber M.V."/>
            <person name="Mayer K."/>
            <person name="Meurer J."/>
            <person name="Haberer G."/>
            <person name="Herrmann R.G."/>
        </authorList>
    </citation>
    <scope>NUCLEOTIDE SEQUENCE [LARGE SCALE GENOMIC DNA]</scope>
    <source>
        <strain>cv. Rr-lamarckiana Sweden</strain>
    </source>
</reference>
<gene>
    <name evidence="1" type="primary">psbC</name>
</gene>
<feature type="propeptide" id="PRO_0000431180" evidence="1">
    <location>
        <begin position="1"/>
        <end position="14"/>
    </location>
</feature>
<feature type="chain" id="PRO_0000361448" description="Photosystem II CP43 reaction center protein" evidence="1">
    <location>
        <begin position="15"/>
        <end position="473"/>
    </location>
</feature>
<feature type="transmembrane region" description="Helical" evidence="1">
    <location>
        <begin position="69"/>
        <end position="93"/>
    </location>
</feature>
<feature type="transmembrane region" description="Helical" evidence="1">
    <location>
        <begin position="134"/>
        <end position="155"/>
    </location>
</feature>
<feature type="transmembrane region" description="Helical" evidence="1">
    <location>
        <begin position="178"/>
        <end position="200"/>
    </location>
</feature>
<feature type="transmembrane region" description="Helical" evidence="1">
    <location>
        <begin position="255"/>
        <end position="275"/>
    </location>
</feature>
<feature type="transmembrane region" description="Helical" evidence="1">
    <location>
        <begin position="291"/>
        <end position="312"/>
    </location>
</feature>
<feature type="transmembrane region" description="Helical" evidence="1">
    <location>
        <begin position="447"/>
        <end position="471"/>
    </location>
</feature>
<feature type="binding site" evidence="1">
    <location>
        <position position="367"/>
    </location>
    <ligand>
        <name>[CaMn4O5] cluster</name>
        <dbReference type="ChEBI" id="CHEBI:189552"/>
    </ligand>
</feature>
<feature type="modified residue" description="N-acetylthreonine" evidence="1">
    <location>
        <position position="15"/>
    </location>
</feature>
<feature type="modified residue" description="Phosphothreonine" evidence="1">
    <location>
        <position position="15"/>
    </location>
</feature>